<evidence type="ECO:0000255" key="1">
    <source>
        <dbReference type="HAMAP-Rule" id="MF_00361"/>
    </source>
</evidence>
<sequence length="286" mass="32382">MQNKIDYKNIKKIGLVTRPNVSLDKEILKLQSILSIYKVELVLLKESSEILDLPKYGLDDLFKISDFVISLGGDGTLISLCRKACEYDKAVLGIHAGHLGFLTDFKVDEAENFFQAFFQGEFRIEKPYLLSIFLEDRQGKILEKLAFNDVVISKNNQASMAHIEVFRKEKKFNEYFGDGLIVATPAGSTAYNLSANGPIVYTLAQAFILTPVCSHSLTQRPIVLPKGFEIEIMAKDCMLCIDGQENYKMNDFKSIKVGLSDKNVALIHPKNRDYFQILKEKLHWGN</sequence>
<keyword id="KW-0067">ATP-binding</keyword>
<keyword id="KW-0963">Cytoplasm</keyword>
<keyword id="KW-0418">Kinase</keyword>
<keyword id="KW-0520">NAD</keyword>
<keyword id="KW-0521">NADP</keyword>
<keyword id="KW-0547">Nucleotide-binding</keyword>
<keyword id="KW-1185">Reference proteome</keyword>
<keyword id="KW-0808">Transferase</keyword>
<protein>
    <recommendedName>
        <fullName evidence="1">NAD kinase</fullName>
        <ecNumber evidence="1">2.7.1.23</ecNumber>
    </recommendedName>
    <alternativeName>
        <fullName evidence="1">ATP-dependent NAD kinase</fullName>
    </alternativeName>
</protein>
<dbReference type="EC" id="2.7.1.23" evidence="1"/>
<dbReference type="EMBL" id="AL111168">
    <property type="protein sequence ID" value="CAL34786.1"/>
    <property type="molecule type" value="Genomic_DNA"/>
</dbReference>
<dbReference type="PIR" id="H81412">
    <property type="entry name" value="H81412"/>
</dbReference>
<dbReference type="RefSeq" id="WP_002858573.1">
    <property type="nucleotide sequence ID" value="NZ_SZUC01000002.1"/>
</dbReference>
<dbReference type="SMR" id="Q9PHM6"/>
<dbReference type="IntAct" id="Q9PHM6">
    <property type="interactions" value="3"/>
</dbReference>
<dbReference type="STRING" id="192222.Cj0641"/>
<dbReference type="PaxDb" id="192222-Cj0641"/>
<dbReference type="EnsemblBacteria" id="CAL34786">
    <property type="protein sequence ID" value="CAL34786"/>
    <property type="gene ID" value="Cj0641"/>
</dbReference>
<dbReference type="KEGG" id="cje:Cj0641"/>
<dbReference type="PATRIC" id="fig|192222.6.peg.633"/>
<dbReference type="eggNOG" id="COG0061">
    <property type="taxonomic scope" value="Bacteria"/>
</dbReference>
<dbReference type="HOGENOM" id="CLU_008831_0_3_7"/>
<dbReference type="OrthoDB" id="9774737at2"/>
<dbReference type="Proteomes" id="UP000000799">
    <property type="component" value="Chromosome"/>
</dbReference>
<dbReference type="GO" id="GO:0005737">
    <property type="term" value="C:cytoplasm"/>
    <property type="evidence" value="ECO:0007669"/>
    <property type="project" value="UniProtKB-SubCell"/>
</dbReference>
<dbReference type="GO" id="GO:0005524">
    <property type="term" value="F:ATP binding"/>
    <property type="evidence" value="ECO:0007669"/>
    <property type="project" value="UniProtKB-KW"/>
</dbReference>
<dbReference type="GO" id="GO:0046872">
    <property type="term" value="F:metal ion binding"/>
    <property type="evidence" value="ECO:0007669"/>
    <property type="project" value="UniProtKB-UniRule"/>
</dbReference>
<dbReference type="GO" id="GO:0051287">
    <property type="term" value="F:NAD binding"/>
    <property type="evidence" value="ECO:0007669"/>
    <property type="project" value="UniProtKB-ARBA"/>
</dbReference>
<dbReference type="GO" id="GO:0003951">
    <property type="term" value="F:NAD+ kinase activity"/>
    <property type="evidence" value="ECO:0007669"/>
    <property type="project" value="UniProtKB-UniRule"/>
</dbReference>
<dbReference type="GO" id="GO:0019674">
    <property type="term" value="P:NAD metabolic process"/>
    <property type="evidence" value="ECO:0007669"/>
    <property type="project" value="InterPro"/>
</dbReference>
<dbReference type="GO" id="GO:0006741">
    <property type="term" value="P:NADP biosynthetic process"/>
    <property type="evidence" value="ECO:0007669"/>
    <property type="project" value="UniProtKB-UniRule"/>
</dbReference>
<dbReference type="Gene3D" id="3.40.50.10330">
    <property type="entry name" value="Probable inorganic polyphosphate/atp-NAD kinase, domain 1"/>
    <property type="match status" value="1"/>
</dbReference>
<dbReference type="Gene3D" id="2.60.200.30">
    <property type="entry name" value="Probable inorganic polyphosphate/atp-NAD kinase, domain 2"/>
    <property type="match status" value="1"/>
</dbReference>
<dbReference type="HAMAP" id="MF_00361">
    <property type="entry name" value="NAD_kinase"/>
    <property type="match status" value="1"/>
</dbReference>
<dbReference type="InterPro" id="IPR017438">
    <property type="entry name" value="ATP-NAD_kinase_N"/>
</dbReference>
<dbReference type="InterPro" id="IPR017437">
    <property type="entry name" value="ATP-NAD_kinase_PpnK-typ_C"/>
</dbReference>
<dbReference type="InterPro" id="IPR016064">
    <property type="entry name" value="NAD/diacylglycerol_kinase_sf"/>
</dbReference>
<dbReference type="InterPro" id="IPR002504">
    <property type="entry name" value="NADK"/>
</dbReference>
<dbReference type="NCBIfam" id="NF010679">
    <property type="entry name" value="PRK14077.1"/>
    <property type="match status" value="1"/>
</dbReference>
<dbReference type="PANTHER" id="PTHR20275">
    <property type="entry name" value="NAD KINASE"/>
    <property type="match status" value="1"/>
</dbReference>
<dbReference type="PANTHER" id="PTHR20275:SF0">
    <property type="entry name" value="NAD KINASE"/>
    <property type="match status" value="1"/>
</dbReference>
<dbReference type="Pfam" id="PF01513">
    <property type="entry name" value="NAD_kinase"/>
    <property type="match status" value="1"/>
</dbReference>
<dbReference type="Pfam" id="PF20143">
    <property type="entry name" value="NAD_kinase_C"/>
    <property type="match status" value="1"/>
</dbReference>
<dbReference type="SUPFAM" id="SSF111331">
    <property type="entry name" value="NAD kinase/diacylglycerol kinase-like"/>
    <property type="match status" value="1"/>
</dbReference>
<accession>Q9PHM6</accession>
<accession>Q0PAM7</accession>
<organism>
    <name type="scientific">Campylobacter jejuni subsp. jejuni serotype O:2 (strain ATCC 700819 / NCTC 11168)</name>
    <dbReference type="NCBI Taxonomy" id="192222"/>
    <lineage>
        <taxon>Bacteria</taxon>
        <taxon>Pseudomonadati</taxon>
        <taxon>Campylobacterota</taxon>
        <taxon>Epsilonproteobacteria</taxon>
        <taxon>Campylobacterales</taxon>
        <taxon>Campylobacteraceae</taxon>
        <taxon>Campylobacter</taxon>
    </lineage>
</organism>
<gene>
    <name evidence="1" type="primary">nadK</name>
    <name type="ordered locus">Cj0641</name>
</gene>
<name>NADK_CAMJE</name>
<feature type="chain" id="PRO_0000120608" description="NAD kinase">
    <location>
        <begin position="1"/>
        <end position="286"/>
    </location>
</feature>
<feature type="active site" description="Proton acceptor" evidence="1">
    <location>
        <position position="74"/>
    </location>
</feature>
<feature type="binding site" evidence="1">
    <location>
        <begin position="74"/>
        <end position="75"/>
    </location>
    <ligand>
        <name>NAD(+)</name>
        <dbReference type="ChEBI" id="CHEBI:57540"/>
    </ligand>
</feature>
<feature type="binding site" evidence="1">
    <location>
        <begin position="148"/>
        <end position="149"/>
    </location>
    <ligand>
        <name>NAD(+)</name>
        <dbReference type="ChEBI" id="CHEBI:57540"/>
    </ligand>
</feature>
<feature type="binding site" evidence="1">
    <location>
        <position position="178"/>
    </location>
    <ligand>
        <name>NAD(+)</name>
        <dbReference type="ChEBI" id="CHEBI:57540"/>
    </ligand>
</feature>
<feature type="binding site" evidence="1">
    <location>
        <position position="186"/>
    </location>
    <ligand>
        <name>NAD(+)</name>
        <dbReference type="ChEBI" id="CHEBI:57540"/>
    </ligand>
</feature>
<feature type="binding site" evidence="1">
    <location>
        <begin position="189"/>
        <end position="194"/>
    </location>
    <ligand>
        <name>NAD(+)</name>
        <dbReference type="ChEBI" id="CHEBI:57540"/>
    </ligand>
</feature>
<feature type="binding site" evidence="1">
    <location>
        <position position="244"/>
    </location>
    <ligand>
        <name>NAD(+)</name>
        <dbReference type="ChEBI" id="CHEBI:57540"/>
    </ligand>
</feature>
<proteinExistence type="inferred from homology"/>
<reference key="1">
    <citation type="journal article" date="2000" name="Nature">
        <title>The genome sequence of the food-borne pathogen Campylobacter jejuni reveals hypervariable sequences.</title>
        <authorList>
            <person name="Parkhill J."/>
            <person name="Wren B.W."/>
            <person name="Mungall K.L."/>
            <person name="Ketley J.M."/>
            <person name="Churcher C.M."/>
            <person name="Basham D."/>
            <person name="Chillingworth T."/>
            <person name="Davies R.M."/>
            <person name="Feltwell T."/>
            <person name="Holroyd S."/>
            <person name="Jagels K."/>
            <person name="Karlyshev A.V."/>
            <person name="Moule S."/>
            <person name="Pallen M.J."/>
            <person name="Penn C.W."/>
            <person name="Quail M.A."/>
            <person name="Rajandream M.A."/>
            <person name="Rutherford K.M."/>
            <person name="van Vliet A.H.M."/>
            <person name="Whitehead S."/>
            <person name="Barrell B.G."/>
        </authorList>
    </citation>
    <scope>NUCLEOTIDE SEQUENCE [LARGE SCALE GENOMIC DNA]</scope>
    <source>
        <strain>ATCC 700819 / NCTC 11168</strain>
    </source>
</reference>
<comment type="function">
    <text evidence="1">Involved in the regulation of the intracellular balance of NAD and NADP, and is a key enzyme in the biosynthesis of NADP. Catalyzes specifically the phosphorylation on 2'-hydroxyl of the adenosine moiety of NAD to yield NADP.</text>
</comment>
<comment type="catalytic activity">
    <reaction evidence="1">
        <text>NAD(+) + ATP = ADP + NADP(+) + H(+)</text>
        <dbReference type="Rhea" id="RHEA:18629"/>
        <dbReference type="ChEBI" id="CHEBI:15378"/>
        <dbReference type="ChEBI" id="CHEBI:30616"/>
        <dbReference type="ChEBI" id="CHEBI:57540"/>
        <dbReference type="ChEBI" id="CHEBI:58349"/>
        <dbReference type="ChEBI" id="CHEBI:456216"/>
        <dbReference type="EC" id="2.7.1.23"/>
    </reaction>
</comment>
<comment type="cofactor">
    <cofactor evidence="1">
        <name>a divalent metal cation</name>
        <dbReference type="ChEBI" id="CHEBI:60240"/>
    </cofactor>
</comment>
<comment type="subcellular location">
    <subcellularLocation>
        <location evidence="1">Cytoplasm</location>
    </subcellularLocation>
</comment>
<comment type="similarity">
    <text evidence="1">Belongs to the NAD kinase family.</text>
</comment>